<comment type="function">
    <text evidence="1">Part of the ABC transporter complex SsuABC involved in aliphatic sulfonates import. Responsible for energy coupling to the transport system.</text>
</comment>
<comment type="catalytic activity">
    <reaction evidence="1">
        <text>ATP + H2O + aliphatic sulfonate-[sulfonate-binding protein]Side 1 = ADP + phosphate + aliphatic sulfonateSide 2 + [sulfonate-binding protein]Side 1.</text>
        <dbReference type="EC" id="7.6.2.14"/>
    </reaction>
</comment>
<comment type="subunit">
    <text evidence="1">The complex is composed of two ATP-binding proteins (SsuB), two transmembrane proteins (SsuC) and a solute-binding protein (SsuA).</text>
</comment>
<comment type="subcellular location">
    <subcellularLocation>
        <location evidence="1">Cell inner membrane</location>
        <topology evidence="1">Peripheral membrane protein</topology>
    </subcellularLocation>
</comment>
<comment type="similarity">
    <text evidence="1">Belongs to the ABC transporter superfamily. Aliphatic sulfonates importer (TC 3.A.1.17.2) family.</text>
</comment>
<gene>
    <name evidence="1" type="primary">ssuB</name>
    <name type="ordered locus">YPA_3640</name>
</gene>
<keyword id="KW-0067">ATP-binding</keyword>
<keyword id="KW-0997">Cell inner membrane</keyword>
<keyword id="KW-1003">Cell membrane</keyword>
<keyword id="KW-0472">Membrane</keyword>
<keyword id="KW-0547">Nucleotide-binding</keyword>
<keyword id="KW-1278">Translocase</keyword>
<keyword id="KW-0813">Transport</keyword>
<sequence>MTTLTHIPQGTPITLESIGKRYGNRTVLDNLQLRITAGQFVAVVGRSGCGKSTLLRLLAGLEAASDGTLLSGNALLSHAKDETRLMFQEARLLPWKKVIDNVGLGLRGHWRDEALQVLDTVGLADRANEWPAALSGGQKQRVALARALIHRPRLLLLDEPLGALDALTRIEMQGLIERLWQQHGFTVLLVTHDVSEAIALADRVLLIEEGRIGLDLAIDLPRPRRKGSAKLAALEAEVLERVLSPPQGIEASRQGIKASRQGTATSRRVAN</sequence>
<name>SSUB_YERPA</name>
<feature type="chain" id="PRO_0000279968" description="Aliphatic sulfonates import ATP-binding protein SsuB">
    <location>
        <begin position="1"/>
        <end position="271"/>
    </location>
</feature>
<feature type="domain" description="ABC transporter" evidence="1">
    <location>
        <begin position="13"/>
        <end position="234"/>
    </location>
</feature>
<feature type="region of interest" description="Disordered" evidence="2">
    <location>
        <begin position="250"/>
        <end position="271"/>
    </location>
</feature>
<feature type="compositionally biased region" description="Polar residues" evidence="2">
    <location>
        <begin position="260"/>
        <end position="271"/>
    </location>
</feature>
<feature type="binding site" evidence="1">
    <location>
        <begin position="45"/>
        <end position="52"/>
    </location>
    <ligand>
        <name>ATP</name>
        <dbReference type="ChEBI" id="CHEBI:30616"/>
    </ligand>
</feature>
<accession>Q1C1S0</accession>
<reference key="1">
    <citation type="journal article" date="2006" name="J. Bacteriol.">
        <title>Complete genome sequence of Yersinia pestis strains Antiqua and Nepal516: evidence of gene reduction in an emerging pathogen.</title>
        <authorList>
            <person name="Chain P.S.G."/>
            <person name="Hu P."/>
            <person name="Malfatti S.A."/>
            <person name="Radnedge L."/>
            <person name="Larimer F."/>
            <person name="Vergez L.M."/>
            <person name="Worsham P."/>
            <person name="Chu M.C."/>
            <person name="Andersen G.L."/>
        </authorList>
    </citation>
    <scope>NUCLEOTIDE SEQUENCE [LARGE SCALE GENOMIC DNA]</scope>
    <source>
        <strain>Antiqua</strain>
    </source>
</reference>
<organism>
    <name type="scientific">Yersinia pestis bv. Antiqua (strain Antiqua)</name>
    <dbReference type="NCBI Taxonomy" id="360102"/>
    <lineage>
        <taxon>Bacteria</taxon>
        <taxon>Pseudomonadati</taxon>
        <taxon>Pseudomonadota</taxon>
        <taxon>Gammaproteobacteria</taxon>
        <taxon>Enterobacterales</taxon>
        <taxon>Yersiniaceae</taxon>
        <taxon>Yersinia</taxon>
    </lineage>
</organism>
<evidence type="ECO:0000255" key="1">
    <source>
        <dbReference type="HAMAP-Rule" id="MF_01724"/>
    </source>
</evidence>
<evidence type="ECO:0000256" key="2">
    <source>
        <dbReference type="SAM" id="MobiDB-lite"/>
    </source>
</evidence>
<dbReference type="EC" id="7.6.2.14" evidence="1"/>
<dbReference type="EMBL" id="CP000308">
    <property type="protein sequence ID" value="ABG15602.1"/>
    <property type="molecule type" value="Genomic_DNA"/>
</dbReference>
<dbReference type="RefSeq" id="WP_002210036.1">
    <property type="nucleotide sequence ID" value="NZ_CP009906.1"/>
</dbReference>
<dbReference type="SMR" id="Q1C1S0"/>
<dbReference type="GeneID" id="57975053"/>
<dbReference type="KEGG" id="ypa:YPA_3640"/>
<dbReference type="Proteomes" id="UP000001971">
    <property type="component" value="Chromosome"/>
</dbReference>
<dbReference type="GO" id="GO:0005886">
    <property type="term" value="C:plasma membrane"/>
    <property type="evidence" value="ECO:0007669"/>
    <property type="project" value="UniProtKB-SubCell"/>
</dbReference>
<dbReference type="GO" id="GO:0005524">
    <property type="term" value="F:ATP binding"/>
    <property type="evidence" value="ECO:0007669"/>
    <property type="project" value="UniProtKB-KW"/>
</dbReference>
<dbReference type="GO" id="GO:0016887">
    <property type="term" value="F:ATP hydrolysis activity"/>
    <property type="evidence" value="ECO:0007669"/>
    <property type="project" value="InterPro"/>
</dbReference>
<dbReference type="CDD" id="cd03293">
    <property type="entry name" value="ABC_NrtD_SsuB_transporters"/>
    <property type="match status" value="1"/>
</dbReference>
<dbReference type="FunFam" id="3.40.50.300:FF:000653">
    <property type="entry name" value="Aliphatic sulfonates import ATP-binding protein SsuB"/>
    <property type="match status" value="1"/>
</dbReference>
<dbReference type="Gene3D" id="3.40.50.300">
    <property type="entry name" value="P-loop containing nucleotide triphosphate hydrolases"/>
    <property type="match status" value="1"/>
</dbReference>
<dbReference type="InterPro" id="IPR003593">
    <property type="entry name" value="AAA+_ATPase"/>
</dbReference>
<dbReference type="InterPro" id="IPR003439">
    <property type="entry name" value="ABC_transporter-like_ATP-bd"/>
</dbReference>
<dbReference type="InterPro" id="IPR017871">
    <property type="entry name" value="ABC_transporter-like_CS"/>
</dbReference>
<dbReference type="InterPro" id="IPR050166">
    <property type="entry name" value="ABC_transporter_ATP-bind"/>
</dbReference>
<dbReference type="InterPro" id="IPR027417">
    <property type="entry name" value="P-loop_NTPase"/>
</dbReference>
<dbReference type="NCBIfam" id="NF008420">
    <property type="entry name" value="PRK11247.1"/>
    <property type="match status" value="1"/>
</dbReference>
<dbReference type="PANTHER" id="PTHR42788:SF17">
    <property type="entry name" value="ALIPHATIC SULFONATES IMPORT ATP-BINDING PROTEIN SSUB"/>
    <property type="match status" value="1"/>
</dbReference>
<dbReference type="PANTHER" id="PTHR42788">
    <property type="entry name" value="TAURINE IMPORT ATP-BINDING PROTEIN-RELATED"/>
    <property type="match status" value="1"/>
</dbReference>
<dbReference type="Pfam" id="PF00005">
    <property type="entry name" value="ABC_tran"/>
    <property type="match status" value="1"/>
</dbReference>
<dbReference type="SMART" id="SM00382">
    <property type="entry name" value="AAA"/>
    <property type="match status" value="1"/>
</dbReference>
<dbReference type="SUPFAM" id="SSF52540">
    <property type="entry name" value="P-loop containing nucleoside triphosphate hydrolases"/>
    <property type="match status" value="1"/>
</dbReference>
<dbReference type="PROSITE" id="PS00211">
    <property type="entry name" value="ABC_TRANSPORTER_1"/>
    <property type="match status" value="1"/>
</dbReference>
<dbReference type="PROSITE" id="PS50893">
    <property type="entry name" value="ABC_TRANSPORTER_2"/>
    <property type="match status" value="1"/>
</dbReference>
<dbReference type="PROSITE" id="PS51291">
    <property type="entry name" value="SSUB"/>
    <property type="match status" value="1"/>
</dbReference>
<protein>
    <recommendedName>
        <fullName evidence="1">Aliphatic sulfonates import ATP-binding protein SsuB</fullName>
        <ecNumber evidence="1">7.6.2.14</ecNumber>
    </recommendedName>
</protein>
<proteinExistence type="inferred from homology"/>